<feature type="chain" id="PRO_1000089342" description="Adenylosuccinate synthetase">
    <location>
        <begin position="1"/>
        <end position="427"/>
    </location>
</feature>
<feature type="active site" description="Proton acceptor" evidence="1">
    <location>
        <position position="13"/>
    </location>
</feature>
<feature type="active site" description="Proton donor" evidence="1">
    <location>
        <position position="41"/>
    </location>
</feature>
<feature type="binding site" evidence="1">
    <location>
        <begin position="12"/>
        <end position="18"/>
    </location>
    <ligand>
        <name>GTP</name>
        <dbReference type="ChEBI" id="CHEBI:37565"/>
    </ligand>
</feature>
<feature type="binding site" description="in other chain" evidence="1">
    <location>
        <begin position="13"/>
        <end position="16"/>
    </location>
    <ligand>
        <name>IMP</name>
        <dbReference type="ChEBI" id="CHEBI:58053"/>
        <note>ligand shared between dimeric partners</note>
    </ligand>
</feature>
<feature type="binding site" evidence="1">
    <location>
        <position position="13"/>
    </location>
    <ligand>
        <name>Mg(2+)</name>
        <dbReference type="ChEBI" id="CHEBI:18420"/>
    </ligand>
</feature>
<feature type="binding site" description="in other chain" evidence="1">
    <location>
        <begin position="38"/>
        <end position="41"/>
    </location>
    <ligand>
        <name>IMP</name>
        <dbReference type="ChEBI" id="CHEBI:58053"/>
        <note>ligand shared between dimeric partners</note>
    </ligand>
</feature>
<feature type="binding site" evidence="1">
    <location>
        <begin position="40"/>
        <end position="42"/>
    </location>
    <ligand>
        <name>GTP</name>
        <dbReference type="ChEBI" id="CHEBI:37565"/>
    </ligand>
</feature>
<feature type="binding site" evidence="1">
    <location>
        <position position="40"/>
    </location>
    <ligand>
        <name>Mg(2+)</name>
        <dbReference type="ChEBI" id="CHEBI:18420"/>
    </ligand>
</feature>
<feature type="binding site" description="in other chain" evidence="1">
    <location>
        <position position="128"/>
    </location>
    <ligand>
        <name>IMP</name>
        <dbReference type="ChEBI" id="CHEBI:58053"/>
        <note>ligand shared between dimeric partners</note>
    </ligand>
</feature>
<feature type="binding site" evidence="1">
    <location>
        <position position="142"/>
    </location>
    <ligand>
        <name>IMP</name>
        <dbReference type="ChEBI" id="CHEBI:58053"/>
        <note>ligand shared between dimeric partners</note>
    </ligand>
</feature>
<feature type="binding site" description="in other chain" evidence="1">
    <location>
        <position position="223"/>
    </location>
    <ligand>
        <name>IMP</name>
        <dbReference type="ChEBI" id="CHEBI:58053"/>
        <note>ligand shared between dimeric partners</note>
    </ligand>
</feature>
<feature type="binding site" description="in other chain" evidence="1">
    <location>
        <position position="238"/>
    </location>
    <ligand>
        <name>IMP</name>
        <dbReference type="ChEBI" id="CHEBI:58053"/>
        <note>ligand shared between dimeric partners</note>
    </ligand>
</feature>
<feature type="binding site" evidence="1">
    <location>
        <begin position="298"/>
        <end position="304"/>
    </location>
    <ligand>
        <name>substrate</name>
    </ligand>
</feature>
<feature type="binding site" description="in other chain" evidence="1">
    <location>
        <position position="302"/>
    </location>
    <ligand>
        <name>IMP</name>
        <dbReference type="ChEBI" id="CHEBI:58053"/>
        <note>ligand shared between dimeric partners</note>
    </ligand>
</feature>
<feature type="binding site" evidence="1">
    <location>
        <position position="304"/>
    </location>
    <ligand>
        <name>GTP</name>
        <dbReference type="ChEBI" id="CHEBI:37565"/>
    </ligand>
</feature>
<feature type="binding site" evidence="1">
    <location>
        <begin position="330"/>
        <end position="332"/>
    </location>
    <ligand>
        <name>GTP</name>
        <dbReference type="ChEBI" id="CHEBI:37565"/>
    </ligand>
</feature>
<feature type="binding site" evidence="1">
    <location>
        <begin position="412"/>
        <end position="414"/>
    </location>
    <ligand>
        <name>GTP</name>
        <dbReference type="ChEBI" id="CHEBI:37565"/>
    </ligand>
</feature>
<reference key="1">
    <citation type="journal article" date="2008" name="J. Bacteriol.">
        <title>Genome sequence of the streptomycin-producing microorganism Streptomyces griseus IFO 13350.</title>
        <authorList>
            <person name="Ohnishi Y."/>
            <person name="Ishikawa J."/>
            <person name="Hara H."/>
            <person name="Suzuki H."/>
            <person name="Ikenoya M."/>
            <person name="Ikeda H."/>
            <person name="Yamashita A."/>
            <person name="Hattori M."/>
            <person name="Horinouchi S."/>
        </authorList>
    </citation>
    <scope>NUCLEOTIDE SEQUENCE [LARGE SCALE GENOMIC DNA]</scope>
    <source>
        <strain>JCM 4626 / CBS 651.72 / NBRC 13350 / KCC S-0626 / ISP 5235</strain>
    </source>
</reference>
<protein>
    <recommendedName>
        <fullName evidence="1">Adenylosuccinate synthetase</fullName>
        <shortName evidence="1">AMPSase</shortName>
        <shortName evidence="1">AdSS</shortName>
        <ecNumber evidence="1">6.3.4.4</ecNumber>
    </recommendedName>
    <alternativeName>
        <fullName evidence="1">IMP--aspartate ligase</fullName>
    </alternativeName>
</protein>
<name>PURA_STRGG</name>
<proteinExistence type="inferred from homology"/>
<accession>B1VMC3</accession>
<organism>
    <name type="scientific">Streptomyces griseus subsp. griseus (strain JCM 4626 / CBS 651.72 / NBRC 13350 / KCC S-0626 / ISP 5235)</name>
    <dbReference type="NCBI Taxonomy" id="455632"/>
    <lineage>
        <taxon>Bacteria</taxon>
        <taxon>Bacillati</taxon>
        <taxon>Actinomycetota</taxon>
        <taxon>Actinomycetes</taxon>
        <taxon>Kitasatosporales</taxon>
        <taxon>Streptomycetaceae</taxon>
        <taxon>Streptomyces</taxon>
    </lineage>
</organism>
<dbReference type="EC" id="6.3.4.4" evidence="1"/>
<dbReference type="EMBL" id="AP009493">
    <property type="protein sequence ID" value="BAG20233.1"/>
    <property type="molecule type" value="Genomic_DNA"/>
</dbReference>
<dbReference type="RefSeq" id="WP_003967545.1">
    <property type="nucleotide sequence ID" value="NC_010572.1"/>
</dbReference>
<dbReference type="SMR" id="B1VMC3"/>
<dbReference type="KEGG" id="sgr:SGR_3404"/>
<dbReference type="eggNOG" id="COG0104">
    <property type="taxonomic scope" value="Bacteria"/>
</dbReference>
<dbReference type="HOGENOM" id="CLU_029848_0_0_11"/>
<dbReference type="UniPathway" id="UPA00075">
    <property type="reaction ID" value="UER00335"/>
</dbReference>
<dbReference type="Proteomes" id="UP000001685">
    <property type="component" value="Chromosome"/>
</dbReference>
<dbReference type="GO" id="GO:0005737">
    <property type="term" value="C:cytoplasm"/>
    <property type="evidence" value="ECO:0007669"/>
    <property type="project" value="UniProtKB-SubCell"/>
</dbReference>
<dbReference type="GO" id="GO:0004019">
    <property type="term" value="F:adenylosuccinate synthase activity"/>
    <property type="evidence" value="ECO:0007669"/>
    <property type="project" value="UniProtKB-UniRule"/>
</dbReference>
<dbReference type="GO" id="GO:0005525">
    <property type="term" value="F:GTP binding"/>
    <property type="evidence" value="ECO:0007669"/>
    <property type="project" value="UniProtKB-UniRule"/>
</dbReference>
<dbReference type="GO" id="GO:0000287">
    <property type="term" value="F:magnesium ion binding"/>
    <property type="evidence" value="ECO:0007669"/>
    <property type="project" value="UniProtKB-UniRule"/>
</dbReference>
<dbReference type="GO" id="GO:0044208">
    <property type="term" value="P:'de novo' AMP biosynthetic process"/>
    <property type="evidence" value="ECO:0007669"/>
    <property type="project" value="UniProtKB-UniRule"/>
</dbReference>
<dbReference type="GO" id="GO:0046040">
    <property type="term" value="P:IMP metabolic process"/>
    <property type="evidence" value="ECO:0007669"/>
    <property type="project" value="TreeGrafter"/>
</dbReference>
<dbReference type="CDD" id="cd03108">
    <property type="entry name" value="AdSS"/>
    <property type="match status" value="1"/>
</dbReference>
<dbReference type="FunFam" id="1.10.300.10:FF:000001">
    <property type="entry name" value="Adenylosuccinate synthetase"/>
    <property type="match status" value="1"/>
</dbReference>
<dbReference type="FunFam" id="3.90.170.10:FF:000001">
    <property type="entry name" value="Adenylosuccinate synthetase"/>
    <property type="match status" value="1"/>
</dbReference>
<dbReference type="Gene3D" id="3.40.440.10">
    <property type="entry name" value="Adenylosuccinate Synthetase, subunit A, domain 1"/>
    <property type="match status" value="1"/>
</dbReference>
<dbReference type="Gene3D" id="1.10.300.10">
    <property type="entry name" value="Adenylosuccinate Synthetase, subunit A, domain 2"/>
    <property type="match status" value="1"/>
</dbReference>
<dbReference type="Gene3D" id="3.90.170.10">
    <property type="entry name" value="Adenylosuccinate Synthetase, subunit A, domain 3"/>
    <property type="match status" value="1"/>
</dbReference>
<dbReference type="HAMAP" id="MF_00011">
    <property type="entry name" value="Adenylosucc_synth"/>
    <property type="match status" value="1"/>
</dbReference>
<dbReference type="InterPro" id="IPR018220">
    <property type="entry name" value="Adenylosuccin_syn_GTP-bd"/>
</dbReference>
<dbReference type="InterPro" id="IPR033128">
    <property type="entry name" value="Adenylosuccin_syn_Lys_AS"/>
</dbReference>
<dbReference type="InterPro" id="IPR042109">
    <property type="entry name" value="Adenylosuccinate_synth_dom1"/>
</dbReference>
<dbReference type="InterPro" id="IPR042110">
    <property type="entry name" value="Adenylosuccinate_synth_dom2"/>
</dbReference>
<dbReference type="InterPro" id="IPR042111">
    <property type="entry name" value="Adenylosuccinate_synth_dom3"/>
</dbReference>
<dbReference type="InterPro" id="IPR001114">
    <property type="entry name" value="Adenylosuccinate_synthetase"/>
</dbReference>
<dbReference type="InterPro" id="IPR027417">
    <property type="entry name" value="P-loop_NTPase"/>
</dbReference>
<dbReference type="NCBIfam" id="NF002223">
    <property type="entry name" value="PRK01117.1"/>
    <property type="match status" value="1"/>
</dbReference>
<dbReference type="NCBIfam" id="TIGR00184">
    <property type="entry name" value="purA"/>
    <property type="match status" value="1"/>
</dbReference>
<dbReference type="PANTHER" id="PTHR11846">
    <property type="entry name" value="ADENYLOSUCCINATE SYNTHETASE"/>
    <property type="match status" value="1"/>
</dbReference>
<dbReference type="PANTHER" id="PTHR11846:SF0">
    <property type="entry name" value="ADENYLOSUCCINATE SYNTHETASE"/>
    <property type="match status" value="1"/>
</dbReference>
<dbReference type="Pfam" id="PF00709">
    <property type="entry name" value="Adenylsucc_synt"/>
    <property type="match status" value="1"/>
</dbReference>
<dbReference type="SMART" id="SM00788">
    <property type="entry name" value="Adenylsucc_synt"/>
    <property type="match status" value="1"/>
</dbReference>
<dbReference type="SUPFAM" id="SSF52540">
    <property type="entry name" value="P-loop containing nucleoside triphosphate hydrolases"/>
    <property type="match status" value="1"/>
</dbReference>
<dbReference type="PROSITE" id="PS01266">
    <property type="entry name" value="ADENYLOSUCCIN_SYN_1"/>
    <property type="match status" value="1"/>
</dbReference>
<dbReference type="PROSITE" id="PS00513">
    <property type="entry name" value="ADENYLOSUCCIN_SYN_2"/>
    <property type="match status" value="1"/>
</dbReference>
<keyword id="KW-0963">Cytoplasm</keyword>
<keyword id="KW-0342">GTP-binding</keyword>
<keyword id="KW-0436">Ligase</keyword>
<keyword id="KW-0460">Magnesium</keyword>
<keyword id="KW-0479">Metal-binding</keyword>
<keyword id="KW-0547">Nucleotide-binding</keyword>
<keyword id="KW-0658">Purine biosynthesis</keyword>
<sequence length="427" mass="45978">MPALVLLGAQWGDEGKGKATDLLGGSVDYVVRYQGGNNAGHTVVVGDQKYALHLLPSGILSPGCTPVIGNGVVVDPAVLLSELSGLNERGVDTSKLLISGNAHLITPYNVTLDKVTERFLGKRKIGTTGRGIGPTYADKINRVGIRVQDLYDESILEQKVEAALEQKNQLLAKVFNRRAIEAGKVVEDMLQYAEQIKPFVADTTLILNDAIDEGKVVLFEGGQGTLLDVDHGTYPFVTSSNPTAGGACTGAGVGPTKISRVIGILKAYTTRVGAGPFPTELHDEDGEALRRIGGERGVTTGRDRRCGWFDAPIARYATRVNGLTDFFLTKLDVLTGWERIPVCVAYEIDGKRVEELPYNQTDFHHAKPIYENLPGWSEDITKAKTFSDLPKNAQAYVKALEEMSGAPISAIGVGPGRTETIEINSFL</sequence>
<gene>
    <name evidence="1" type="primary">purA</name>
    <name type="ordered locus">SGR_3404</name>
</gene>
<evidence type="ECO:0000255" key="1">
    <source>
        <dbReference type="HAMAP-Rule" id="MF_00011"/>
    </source>
</evidence>
<comment type="function">
    <text evidence="1">Plays an important role in the de novo pathway of purine nucleotide biosynthesis. Catalyzes the first committed step in the biosynthesis of AMP from IMP.</text>
</comment>
<comment type="catalytic activity">
    <reaction evidence="1">
        <text>IMP + L-aspartate + GTP = N(6)-(1,2-dicarboxyethyl)-AMP + GDP + phosphate + 2 H(+)</text>
        <dbReference type="Rhea" id="RHEA:15753"/>
        <dbReference type="ChEBI" id="CHEBI:15378"/>
        <dbReference type="ChEBI" id="CHEBI:29991"/>
        <dbReference type="ChEBI" id="CHEBI:37565"/>
        <dbReference type="ChEBI" id="CHEBI:43474"/>
        <dbReference type="ChEBI" id="CHEBI:57567"/>
        <dbReference type="ChEBI" id="CHEBI:58053"/>
        <dbReference type="ChEBI" id="CHEBI:58189"/>
        <dbReference type="EC" id="6.3.4.4"/>
    </reaction>
</comment>
<comment type="cofactor">
    <cofactor evidence="1">
        <name>Mg(2+)</name>
        <dbReference type="ChEBI" id="CHEBI:18420"/>
    </cofactor>
    <text evidence="1">Binds 1 Mg(2+) ion per subunit.</text>
</comment>
<comment type="pathway">
    <text evidence="1">Purine metabolism; AMP biosynthesis via de novo pathway; AMP from IMP: step 1/2.</text>
</comment>
<comment type="subunit">
    <text evidence="1">Homodimer.</text>
</comment>
<comment type="subcellular location">
    <subcellularLocation>
        <location evidence="1">Cytoplasm</location>
    </subcellularLocation>
</comment>
<comment type="similarity">
    <text evidence="1">Belongs to the adenylosuccinate synthetase family.</text>
</comment>